<accession>Q1LJY1</accession>
<proteinExistence type="inferred from homology"/>
<comment type="function">
    <text evidence="1">Catalyzes the ATP-dependent conversion of 7-carboxy-7-deazaguanine (CDG) to 7-cyano-7-deazaguanine (preQ(0)).</text>
</comment>
<comment type="catalytic activity">
    <reaction evidence="1">
        <text>7-carboxy-7-deazaguanine + NH4(+) + ATP = 7-cyano-7-deazaguanine + ADP + phosphate + H2O + H(+)</text>
        <dbReference type="Rhea" id="RHEA:27982"/>
        <dbReference type="ChEBI" id="CHEBI:15377"/>
        <dbReference type="ChEBI" id="CHEBI:15378"/>
        <dbReference type="ChEBI" id="CHEBI:28938"/>
        <dbReference type="ChEBI" id="CHEBI:30616"/>
        <dbReference type="ChEBI" id="CHEBI:43474"/>
        <dbReference type="ChEBI" id="CHEBI:45075"/>
        <dbReference type="ChEBI" id="CHEBI:61036"/>
        <dbReference type="ChEBI" id="CHEBI:456216"/>
        <dbReference type="EC" id="6.3.4.20"/>
    </reaction>
</comment>
<comment type="cofactor">
    <cofactor evidence="1">
        <name>Zn(2+)</name>
        <dbReference type="ChEBI" id="CHEBI:29105"/>
    </cofactor>
    <text evidence="1">Binds 1 zinc ion per subunit.</text>
</comment>
<comment type="pathway">
    <text evidence="1">Purine metabolism; 7-cyano-7-deazaguanine biosynthesis.</text>
</comment>
<comment type="similarity">
    <text evidence="1">Belongs to the QueC family.</text>
</comment>
<keyword id="KW-0067">ATP-binding</keyword>
<keyword id="KW-0436">Ligase</keyword>
<keyword id="KW-0479">Metal-binding</keyword>
<keyword id="KW-0547">Nucleotide-binding</keyword>
<keyword id="KW-0671">Queuosine biosynthesis</keyword>
<keyword id="KW-1185">Reference proteome</keyword>
<keyword id="KW-0862">Zinc</keyword>
<organism>
    <name type="scientific">Cupriavidus metallidurans (strain ATCC 43123 / DSM 2839 / NBRC 102507 / CH34)</name>
    <name type="common">Ralstonia metallidurans</name>
    <dbReference type="NCBI Taxonomy" id="266264"/>
    <lineage>
        <taxon>Bacteria</taxon>
        <taxon>Pseudomonadati</taxon>
        <taxon>Pseudomonadota</taxon>
        <taxon>Betaproteobacteria</taxon>
        <taxon>Burkholderiales</taxon>
        <taxon>Burkholderiaceae</taxon>
        <taxon>Cupriavidus</taxon>
    </lineage>
</organism>
<gene>
    <name evidence="1" type="primary">queC</name>
    <name type="ordered locus">Rmet_2672</name>
</gene>
<evidence type="ECO:0000255" key="1">
    <source>
        <dbReference type="HAMAP-Rule" id="MF_01633"/>
    </source>
</evidence>
<name>QUEC_CUPMC</name>
<reference key="1">
    <citation type="journal article" date="2010" name="PLoS ONE">
        <title>The complete genome sequence of Cupriavidus metallidurans strain CH34, a master survivalist in harsh and anthropogenic environments.</title>
        <authorList>
            <person name="Janssen P.J."/>
            <person name="Van Houdt R."/>
            <person name="Moors H."/>
            <person name="Monsieurs P."/>
            <person name="Morin N."/>
            <person name="Michaux A."/>
            <person name="Benotmane M.A."/>
            <person name="Leys N."/>
            <person name="Vallaeys T."/>
            <person name="Lapidus A."/>
            <person name="Monchy S."/>
            <person name="Medigue C."/>
            <person name="Taghavi S."/>
            <person name="McCorkle S."/>
            <person name="Dunn J."/>
            <person name="van der Lelie D."/>
            <person name="Mergeay M."/>
        </authorList>
    </citation>
    <scope>NUCLEOTIDE SEQUENCE [LARGE SCALE GENOMIC DNA]</scope>
    <source>
        <strain>ATCC 43123 / DSM 2839 / NBRC 102507 / CH34</strain>
    </source>
</reference>
<sequence>MTKRAIVLLSGGLDSATVLAMANAAGFETYALSMRYGQRHSSELEAAKRVAAELGAKRHEIIDLDLRRFGGSALTDDALDVPTDGAAGGIPITYVPARNTIMLSLALGWAEAIGGRDLFFGANAVDYSGYPDCRPEYVAAYETLANLATKAGVEGDRFHVHAPIIDMTKAEIILAGVKLGVDYGLTVSCYKADDDGRACGVCDSCRIRRAGFEAAGVPDPTRYQTPN</sequence>
<feature type="chain" id="PRO_0000246896" description="7-cyano-7-deazaguanine synthase">
    <location>
        <begin position="1"/>
        <end position="227"/>
    </location>
</feature>
<feature type="binding site" evidence="1">
    <location>
        <begin position="9"/>
        <end position="19"/>
    </location>
    <ligand>
        <name>ATP</name>
        <dbReference type="ChEBI" id="CHEBI:30616"/>
    </ligand>
</feature>
<feature type="binding site" evidence="1">
    <location>
        <position position="189"/>
    </location>
    <ligand>
        <name>Zn(2+)</name>
        <dbReference type="ChEBI" id="CHEBI:29105"/>
    </ligand>
</feature>
<feature type="binding site" evidence="1">
    <location>
        <position position="199"/>
    </location>
    <ligand>
        <name>Zn(2+)</name>
        <dbReference type="ChEBI" id="CHEBI:29105"/>
    </ligand>
</feature>
<feature type="binding site" evidence="1">
    <location>
        <position position="202"/>
    </location>
    <ligand>
        <name>Zn(2+)</name>
        <dbReference type="ChEBI" id="CHEBI:29105"/>
    </ligand>
</feature>
<feature type="binding site" evidence="1">
    <location>
        <position position="205"/>
    </location>
    <ligand>
        <name>Zn(2+)</name>
        <dbReference type="ChEBI" id="CHEBI:29105"/>
    </ligand>
</feature>
<protein>
    <recommendedName>
        <fullName evidence="1">7-cyano-7-deazaguanine synthase</fullName>
        <ecNumber evidence="1">6.3.4.20</ecNumber>
    </recommendedName>
    <alternativeName>
        <fullName evidence="1">7-cyano-7-carbaguanine synthase</fullName>
    </alternativeName>
    <alternativeName>
        <fullName evidence="1">PreQ(0) synthase</fullName>
    </alternativeName>
    <alternativeName>
        <fullName evidence="1">Queuosine biosynthesis protein QueC</fullName>
    </alternativeName>
</protein>
<dbReference type="EC" id="6.3.4.20" evidence="1"/>
<dbReference type="EMBL" id="CP000352">
    <property type="protein sequence ID" value="ABF09545.1"/>
    <property type="molecule type" value="Genomic_DNA"/>
</dbReference>
<dbReference type="RefSeq" id="WP_011517247.1">
    <property type="nucleotide sequence ID" value="NC_007973.1"/>
</dbReference>
<dbReference type="SMR" id="Q1LJY1"/>
<dbReference type="STRING" id="266264.Rmet_2672"/>
<dbReference type="KEGG" id="rme:Rmet_2672"/>
<dbReference type="eggNOG" id="COG0603">
    <property type="taxonomic scope" value="Bacteria"/>
</dbReference>
<dbReference type="HOGENOM" id="CLU_081854_1_1_4"/>
<dbReference type="UniPathway" id="UPA00391"/>
<dbReference type="Proteomes" id="UP000002429">
    <property type="component" value="Chromosome"/>
</dbReference>
<dbReference type="GO" id="GO:0005524">
    <property type="term" value="F:ATP binding"/>
    <property type="evidence" value="ECO:0007669"/>
    <property type="project" value="UniProtKB-UniRule"/>
</dbReference>
<dbReference type="GO" id="GO:0016879">
    <property type="term" value="F:ligase activity, forming carbon-nitrogen bonds"/>
    <property type="evidence" value="ECO:0007669"/>
    <property type="project" value="UniProtKB-UniRule"/>
</dbReference>
<dbReference type="GO" id="GO:0008270">
    <property type="term" value="F:zinc ion binding"/>
    <property type="evidence" value="ECO:0007669"/>
    <property type="project" value="UniProtKB-UniRule"/>
</dbReference>
<dbReference type="GO" id="GO:0008616">
    <property type="term" value="P:queuosine biosynthetic process"/>
    <property type="evidence" value="ECO:0007669"/>
    <property type="project" value="UniProtKB-UniRule"/>
</dbReference>
<dbReference type="CDD" id="cd01995">
    <property type="entry name" value="QueC-like"/>
    <property type="match status" value="1"/>
</dbReference>
<dbReference type="FunFam" id="3.40.50.620:FF:000131">
    <property type="entry name" value="7-cyano-7-deazaguanine synthase"/>
    <property type="match status" value="1"/>
</dbReference>
<dbReference type="Gene3D" id="3.40.50.620">
    <property type="entry name" value="HUPs"/>
    <property type="match status" value="1"/>
</dbReference>
<dbReference type="HAMAP" id="MF_01633">
    <property type="entry name" value="QueC"/>
    <property type="match status" value="1"/>
</dbReference>
<dbReference type="InterPro" id="IPR018317">
    <property type="entry name" value="QueC"/>
</dbReference>
<dbReference type="InterPro" id="IPR014729">
    <property type="entry name" value="Rossmann-like_a/b/a_fold"/>
</dbReference>
<dbReference type="NCBIfam" id="TIGR00364">
    <property type="entry name" value="7-cyano-7-deazaguanine synthase QueC"/>
    <property type="match status" value="1"/>
</dbReference>
<dbReference type="PANTHER" id="PTHR42914">
    <property type="entry name" value="7-CYANO-7-DEAZAGUANINE SYNTHASE"/>
    <property type="match status" value="1"/>
</dbReference>
<dbReference type="PANTHER" id="PTHR42914:SF1">
    <property type="entry name" value="7-CYANO-7-DEAZAGUANINE SYNTHASE"/>
    <property type="match status" value="1"/>
</dbReference>
<dbReference type="Pfam" id="PF06508">
    <property type="entry name" value="QueC"/>
    <property type="match status" value="1"/>
</dbReference>
<dbReference type="PIRSF" id="PIRSF006293">
    <property type="entry name" value="ExsB"/>
    <property type="match status" value="1"/>
</dbReference>
<dbReference type="SUPFAM" id="SSF52402">
    <property type="entry name" value="Adenine nucleotide alpha hydrolases-like"/>
    <property type="match status" value="1"/>
</dbReference>